<proteinExistence type="inferred from homology"/>
<protein>
    <recommendedName>
        <fullName evidence="2">Small ribosomal subunit protein uS12</fullName>
    </recommendedName>
    <alternativeName>
        <fullName evidence="3">30S ribosomal protein S12</fullName>
    </alternativeName>
</protein>
<organism>
    <name type="scientific">Brucella ovis (strain ATCC 25840 / 63/290 / NCTC 10512)</name>
    <dbReference type="NCBI Taxonomy" id="444178"/>
    <lineage>
        <taxon>Bacteria</taxon>
        <taxon>Pseudomonadati</taxon>
        <taxon>Pseudomonadota</taxon>
        <taxon>Alphaproteobacteria</taxon>
        <taxon>Hyphomicrobiales</taxon>
        <taxon>Brucellaceae</taxon>
        <taxon>Brucella/Ochrobactrum group</taxon>
        <taxon>Brucella</taxon>
    </lineage>
</organism>
<reference key="1">
    <citation type="journal article" date="2009" name="PLoS ONE">
        <title>Genome degradation in Brucella ovis corresponds with narrowing of its host range and tissue tropism.</title>
        <authorList>
            <person name="Tsolis R.M."/>
            <person name="Seshadri R."/>
            <person name="Santos R.L."/>
            <person name="Sangari F.J."/>
            <person name="Lobo J.M."/>
            <person name="de Jong M.F."/>
            <person name="Ren Q."/>
            <person name="Myers G."/>
            <person name="Brinkac L.M."/>
            <person name="Nelson W.C."/>
            <person name="Deboy R.T."/>
            <person name="Angiuoli S."/>
            <person name="Khouri H."/>
            <person name="Dimitrov G."/>
            <person name="Robinson J.R."/>
            <person name="Mulligan S."/>
            <person name="Walker R.L."/>
            <person name="Elzer P.E."/>
            <person name="Hassan K.A."/>
            <person name="Paulsen I.T."/>
        </authorList>
    </citation>
    <scope>NUCLEOTIDE SEQUENCE [LARGE SCALE GENOMIC DNA]</scope>
    <source>
        <strain>ATCC 25840 / 63/290 / NCTC 10512</strain>
    </source>
</reference>
<accession>A5VR11</accession>
<keyword id="KW-0488">Methylation</keyword>
<keyword id="KW-0687">Ribonucleoprotein</keyword>
<keyword id="KW-0689">Ribosomal protein</keyword>
<keyword id="KW-0694">RNA-binding</keyword>
<keyword id="KW-0699">rRNA-binding</keyword>
<keyword id="KW-0820">tRNA-binding</keyword>
<sequence length="123" mass="13871">MPTVNQLIRKPRTAPVKRNKVPALQANPQKRGVCTRVYTTTPKKPNSALRKVAKVRLTNGFEVIGYIPGEGHNLQEHSVVMIRGGRVKDLPGVRYHIIRGVLDTQGVKNRKQRRSKYGAKRPK</sequence>
<gene>
    <name evidence="2" type="primary">rpsL</name>
    <name type="ordered locus">BOV_1201</name>
</gene>
<evidence type="ECO:0000250" key="1"/>
<evidence type="ECO:0000255" key="2">
    <source>
        <dbReference type="HAMAP-Rule" id="MF_00403"/>
    </source>
</evidence>
<evidence type="ECO:0000305" key="3"/>
<feature type="chain" id="PRO_1000049771" description="Small ribosomal subunit protein uS12">
    <location>
        <begin position="1"/>
        <end position="123"/>
    </location>
</feature>
<feature type="modified residue" description="3-methylthioaspartic acid" evidence="1">
    <location>
        <position position="89"/>
    </location>
</feature>
<name>RS12_BRUO2</name>
<comment type="function">
    <text evidence="2">With S4 and S5 plays an important role in translational accuracy.</text>
</comment>
<comment type="function">
    <text evidence="2">Interacts with and stabilizes bases of the 16S rRNA that are involved in tRNA selection in the A site and with the mRNA backbone. Located at the interface of the 30S and 50S subunits, it traverses the body of the 30S subunit contacting proteins on the other side and probably holding the rRNA structure together. The combined cluster of proteins S8, S12 and S17 appears to hold together the shoulder and platform of the 30S subunit.</text>
</comment>
<comment type="subunit">
    <text evidence="2">Part of the 30S ribosomal subunit. Contacts proteins S8 and S17. May interact with IF1 in the 30S initiation complex.</text>
</comment>
<comment type="similarity">
    <text evidence="2">Belongs to the universal ribosomal protein uS12 family.</text>
</comment>
<dbReference type="EMBL" id="CP000708">
    <property type="protein sequence ID" value="ABQ61338.1"/>
    <property type="molecule type" value="Genomic_DNA"/>
</dbReference>
<dbReference type="RefSeq" id="WP_002964366.1">
    <property type="nucleotide sequence ID" value="NC_009505.1"/>
</dbReference>
<dbReference type="SMR" id="A5VR11"/>
<dbReference type="GeneID" id="93016435"/>
<dbReference type="KEGG" id="bov:BOV_1201"/>
<dbReference type="HOGENOM" id="CLU_104295_1_2_5"/>
<dbReference type="PRO" id="PR:A5VR11"/>
<dbReference type="Proteomes" id="UP000006383">
    <property type="component" value="Chromosome I"/>
</dbReference>
<dbReference type="GO" id="GO:0015935">
    <property type="term" value="C:small ribosomal subunit"/>
    <property type="evidence" value="ECO:0007669"/>
    <property type="project" value="InterPro"/>
</dbReference>
<dbReference type="GO" id="GO:0019843">
    <property type="term" value="F:rRNA binding"/>
    <property type="evidence" value="ECO:0007669"/>
    <property type="project" value="UniProtKB-UniRule"/>
</dbReference>
<dbReference type="GO" id="GO:0003735">
    <property type="term" value="F:structural constituent of ribosome"/>
    <property type="evidence" value="ECO:0007669"/>
    <property type="project" value="InterPro"/>
</dbReference>
<dbReference type="GO" id="GO:0000049">
    <property type="term" value="F:tRNA binding"/>
    <property type="evidence" value="ECO:0007669"/>
    <property type="project" value="UniProtKB-UniRule"/>
</dbReference>
<dbReference type="GO" id="GO:0006412">
    <property type="term" value="P:translation"/>
    <property type="evidence" value="ECO:0007669"/>
    <property type="project" value="UniProtKB-UniRule"/>
</dbReference>
<dbReference type="CDD" id="cd03368">
    <property type="entry name" value="Ribosomal_S12"/>
    <property type="match status" value="1"/>
</dbReference>
<dbReference type="FunFam" id="2.40.50.140:FF:000001">
    <property type="entry name" value="30S ribosomal protein S12"/>
    <property type="match status" value="1"/>
</dbReference>
<dbReference type="Gene3D" id="2.40.50.140">
    <property type="entry name" value="Nucleic acid-binding proteins"/>
    <property type="match status" value="1"/>
</dbReference>
<dbReference type="HAMAP" id="MF_00403_B">
    <property type="entry name" value="Ribosomal_uS12_B"/>
    <property type="match status" value="1"/>
</dbReference>
<dbReference type="InterPro" id="IPR012340">
    <property type="entry name" value="NA-bd_OB-fold"/>
</dbReference>
<dbReference type="InterPro" id="IPR006032">
    <property type="entry name" value="Ribosomal_uS12"/>
</dbReference>
<dbReference type="InterPro" id="IPR005679">
    <property type="entry name" value="Ribosomal_uS12_bac"/>
</dbReference>
<dbReference type="NCBIfam" id="TIGR00981">
    <property type="entry name" value="rpsL_bact"/>
    <property type="match status" value="1"/>
</dbReference>
<dbReference type="PANTHER" id="PTHR11652">
    <property type="entry name" value="30S RIBOSOMAL PROTEIN S12 FAMILY MEMBER"/>
    <property type="match status" value="1"/>
</dbReference>
<dbReference type="Pfam" id="PF00164">
    <property type="entry name" value="Ribosom_S12_S23"/>
    <property type="match status" value="1"/>
</dbReference>
<dbReference type="PIRSF" id="PIRSF002133">
    <property type="entry name" value="Ribosomal_S12/S23"/>
    <property type="match status" value="1"/>
</dbReference>
<dbReference type="PRINTS" id="PR01034">
    <property type="entry name" value="RIBOSOMALS12"/>
</dbReference>
<dbReference type="SUPFAM" id="SSF50249">
    <property type="entry name" value="Nucleic acid-binding proteins"/>
    <property type="match status" value="1"/>
</dbReference>
<dbReference type="PROSITE" id="PS00055">
    <property type="entry name" value="RIBOSOMAL_S12"/>
    <property type="match status" value="1"/>
</dbReference>